<organism>
    <name type="scientific">Homo sapiens</name>
    <name type="common">Human</name>
    <dbReference type="NCBI Taxonomy" id="9606"/>
    <lineage>
        <taxon>Eukaryota</taxon>
        <taxon>Metazoa</taxon>
        <taxon>Chordata</taxon>
        <taxon>Craniata</taxon>
        <taxon>Vertebrata</taxon>
        <taxon>Euteleostomi</taxon>
        <taxon>Mammalia</taxon>
        <taxon>Eutheria</taxon>
        <taxon>Euarchontoglires</taxon>
        <taxon>Primates</taxon>
        <taxon>Haplorrhini</taxon>
        <taxon>Catarrhini</taxon>
        <taxon>Hominidae</taxon>
        <taxon>Homo</taxon>
    </lineage>
</organism>
<dbReference type="EMBL" id="J04102">
    <property type="protein sequence ID" value="AAA52412.1"/>
    <property type="molecule type" value="mRNA"/>
</dbReference>
<dbReference type="EMBL" id="AF017257">
    <property type="protein sequence ID" value="AAB94057.1"/>
    <property type="molecule type" value="Genomic_DNA"/>
</dbReference>
<dbReference type="EMBL" id="AK315563">
    <property type="protein sequence ID" value="BAG37939.1"/>
    <property type="molecule type" value="mRNA"/>
</dbReference>
<dbReference type="EMBL" id="BT006838">
    <property type="protein sequence ID" value="AAP35484.1"/>
    <property type="molecule type" value="mRNA"/>
</dbReference>
<dbReference type="EMBL" id="AL163278">
    <property type="protein sequence ID" value="CAB90468.1"/>
    <property type="molecule type" value="Genomic_DNA"/>
</dbReference>
<dbReference type="EMBL" id="AP001732">
    <property type="protein sequence ID" value="BAA95514.1"/>
    <property type="molecule type" value="Genomic_DNA"/>
</dbReference>
<dbReference type="EMBL" id="AP001040">
    <property type="status" value="NOT_ANNOTATED_CDS"/>
    <property type="molecule type" value="Genomic_DNA"/>
</dbReference>
<dbReference type="EMBL" id="CH471079">
    <property type="protein sequence ID" value="EAX09673.1"/>
    <property type="molecule type" value="Genomic_DNA"/>
</dbReference>
<dbReference type="EMBL" id="CH471079">
    <property type="protein sequence ID" value="EAX09674.1"/>
    <property type="molecule type" value="Genomic_DNA"/>
</dbReference>
<dbReference type="EMBL" id="CH471079">
    <property type="protein sequence ID" value="EAX09676.1"/>
    <property type="molecule type" value="Genomic_DNA"/>
</dbReference>
<dbReference type="EMBL" id="BC017040">
    <property type="protein sequence ID" value="AAH17040.1"/>
    <property type="molecule type" value="mRNA"/>
</dbReference>
<dbReference type="EMBL" id="BC042954">
    <property type="protein sequence ID" value="AAH42954.1"/>
    <property type="molecule type" value="mRNA"/>
</dbReference>
<dbReference type="EMBL" id="X55181">
    <property type="protein sequence ID" value="CAA38966.1"/>
    <property type="molecule type" value="Genomic_DNA"/>
</dbReference>
<dbReference type="EMBL" id="M11922">
    <property type="protein sequence ID" value="AAA52411.1"/>
    <property type="molecule type" value="mRNA"/>
</dbReference>
<dbReference type="CCDS" id="CCDS13659.1"/>
<dbReference type="PIR" id="B32066">
    <property type="entry name" value="TVHUE2"/>
</dbReference>
<dbReference type="RefSeq" id="NP_005230.1">
    <property type="nucleotide sequence ID" value="NM_005239.6"/>
</dbReference>
<dbReference type="RefSeq" id="XP_005260992.1">
    <property type="nucleotide sequence ID" value="XM_005260935.2"/>
</dbReference>
<dbReference type="RefSeq" id="XP_016883779.1">
    <property type="nucleotide sequence ID" value="XM_017028290.2"/>
</dbReference>
<dbReference type="RefSeq" id="XP_054180345.1">
    <property type="nucleotide sequence ID" value="XM_054324370.1"/>
</dbReference>
<dbReference type="PDB" id="4BQA">
    <property type="method" value="X-ray"/>
    <property type="resolution" value="2.50 A"/>
    <property type="chains" value="A/D/G=325-464"/>
</dbReference>
<dbReference type="PDB" id="4MHV">
    <property type="method" value="X-ray"/>
    <property type="resolution" value="2.45 A"/>
    <property type="chains" value="A/B=76-170"/>
</dbReference>
<dbReference type="PDBsum" id="4BQA"/>
<dbReference type="PDBsum" id="4MHV"/>
<dbReference type="SMR" id="P15036"/>
<dbReference type="BioGRID" id="108415">
    <property type="interactions" value="51"/>
</dbReference>
<dbReference type="CORUM" id="P15036"/>
<dbReference type="DIP" id="DIP-40452N"/>
<dbReference type="FunCoup" id="P15036">
    <property type="interactions" value="2195"/>
</dbReference>
<dbReference type="IntAct" id="P15036">
    <property type="interactions" value="41"/>
</dbReference>
<dbReference type="MINT" id="P15036"/>
<dbReference type="STRING" id="9606.ENSP00000353344"/>
<dbReference type="GlyGen" id="P15036">
    <property type="glycosylation" value="1 site"/>
</dbReference>
<dbReference type="iPTMnet" id="P15036"/>
<dbReference type="PhosphoSitePlus" id="P15036"/>
<dbReference type="BioMuta" id="ETS2"/>
<dbReference type="DMDM" id="119645"/>
<dbReference type="jPOST" id="P15036"/>
<dbReference type="MassIVE" id="P15036"/>
<dbReference type="PaxDb" id="9606-ENSP00000353344"/>
<dbReference type="PeptideAtlas" id="P15036"/>
<dbReference type="ProteomicsDB" id="53101"/>
<dbReference type="Pumba" id="P15036"/>
<dbReference type="Antibodypedia" id="8721">
    <property type="antibodies" value="415 antibodies from 33 providers"/>
</dbReference>
<dbReference type="DNASU" id="2114"/>
<dbReference type="Ensembl" id="ENST00000360214.8">
    <property type="protein sequence ID" value="ENSP00000353344.3"/>
    <property type="gene ID" value="ENSG00000157557.13"/>
</dbReference>
<dbReference type="Ensembl" id="ENST00000360938.8">
    <property type="protein sequence ID" value="ENSP00000354194.3"/>
    <property type="gene ID" value="ENSG00000157557.13"/>
</dbReference>
<dbReference type="Ensembl" id="ENST00000653642.1">
    <property type="protein sequence ID" value="ENSP00000499315.1"/>
    <property type="gene ID" value="ENSG00000157557.13"/>
</dbReference>
<dbReference type="Ensembl" id="ENST00000662305.1">
    <property type="protein sequence ID" value="ENSP00000499226.1"/>
    <property type="gene ID" value="ENSG00000157557.13"/>
</dbReference>
<dbReference type="Ensembl" id="ENST00000666778.1">
    <property type="protein sequence ID" value="ENSP00000499775.1"/>
    <property type="gene ID" value="ENSG00000157557.13"/>
</dbReference>
<dbReference type="GeneID" id="2114"/>
<dbReference type="KEGG" id="hsa:2114"/>
<dbReference type="MANE-Select" id="ENST00000360938.8">
    <property type="protein sequence ID" value="ENSP00000354194.3"/>
    <property type="RefSeq nucleotide sequence ID" value="NM_005239.6"/>
    <property type="RefSeq protein sequence ID" value="NP_005230.1"/>
</dbReference>
<dbReference type="UCSC" id="uc002yxf.4">
    <property type="organism name" value="human"/>
</dbReference>
<dbReference type="AGR" id="HGNC:3489"/>
<dbReference type="CTD" id="2114"/>
<dbReference type="DisGeNET" id="2114"/>
<dbReference type="GeneCards" id="ETS2"/>
<dbReference type="HGNC" id="HGNC:3489">
    <property type="gene designation" value="ETS2"/>
</dbReference>
<dbReference type="HPA" id="ENSG00000157557">
    <property type="expression patterns" value="Low tissue specificity"/>
</dbReference>
<dbReference type="MIM" id="164740">
    <property type="type" value="gene"/>
</dbReference>
<dbReference type="neXtProt" id="NX_P15036"/>
<dbReference type="OpenTargets" id="ENSG00000157557"/>
<dbReference type="PharmGKB" id="PA27903"/>
<dbReference type="VEuPathDB" id="HostDB:ENSG00000157557"/>
<dbReference type="eggNOG" id="KOG3806">
    <property type="taxonomic scope" value="Eukaryota"/>
</dbReference>
<dbReference type="GeneTree" id="ENSGT00940000160202"/>
<dbReference type="HOGENOM" id="CLU_031197_1_1_1"/>
<dbReference type="InParanoid" id="P15036"/>
<dbReference type="OMA" id="DFGIRNM"/>
<dbReference type="OrthoDB" id="10067219at2759"/>
<dbReference type="PAN-GO" id="P15036">
    <property type="GO annotations" value="4 GO annotations based on evolutionary models"/>
</dbReference>
<dbReference type="PhylomeDB" id="P15036"/>
<dbReference type="TreeFam" id="TF316214"/>
<dbReference type="PathwayCommons" id="P15036"/>
<dbReference type="Reactome" id="R-HSA-2559585">
    <property type="pathway name" value="Oncogene Induced Senescence"/>
</dbReference>
<dbReference type="SignaLink" id="P15036"/>
<dbReference type="SIGNOR" id="P15036"/>
<dbReference type="BioGRID-ORCS" id="2114">
    <property type="hits" value="25 hits in 1181 CRISPR screens"/>
</dbReference>
<dbReference type="ChiTaRS" id="ETS2">
    <property type="organism name" value="human"/>
</dbReference>
<dbReference type="EvolutionaryTrace" id="P15036"/>
<dbReference type="GeneWiki" id="ETS2"/>
<dbReference type="GenomeRNAi" id="2114"/>
<dbReference type="Pharos" id="P15036">
    <property type="development level" value="Tbio"/>
</dbReference>
<dbReference type="PRO" id="PR:P15036"/>
<dbReference type="Proteomes" id="UP000005640">
    <property type="component" value="Chromosome 21"/>
</dbReference>
<dbReference type="RNAct" id="P15036">
    <property type="molecule type" value="protein"/>
</dbReference>
<dbReference type="Bgee" id="ENSG00000157557">
    <property type="expression patterns" value="Expressed in skin of abdomen and 203 other cell types or tissues"/>
</dbReference>
<dbReference type="ExpressionAtlas" id="P15036">
    <property type="expression patterns" value="baseline and differential"/>
</dbReference>
<dbReference type="GO" id="GO:0000785">
    <property type="term" value="C:chromatin"/>
    <property type="evidence" value="ECO:0000247"/>
    <property type="project" value="NTNU_SB"/>
</dbReference>
<dbReference type="GO" id="GO:0005829">
    <property type="term" value="C:cytosol"/>
    <property type="evidence" value="ECO:0000314"/>
    <property type="project" value="HPA"/>
</dbReference>
<dbReference type="GO" id="GO:0005654">
    <property type="term" value="C:nucleoplasm"/>
    <property type="evidence" value="ECO:0000314"/>
    <property type="project" value="HPA"/>
</dbReference>
<dbReference type="GO" id="GO:0005634">
    <property type="term" value="C:nucleus"/>
    <property type="evidence" value="ECO:0007005"/>
    <property type="project" value="UniProtKB"/>
</dbReference>
<dbReference type="GO" id="GO:0005886">
    <property type="term" value="C:plasma membrane"/>
    <property type="evidence" value="ECO:0000314"/>
    <property type="project" value="HPA"/>
</dbReference>
<dbReference type="GO" id="GO:0003677">
    <property type="term" value="F:DNA binding"/>
    <property type="evidence" value="ECO:0000304"/>
    <property type="project" value="ProtInc"/>
</dbReference>
<dbReference type="GO" id="GO:0003700">
    <property type="term" value="F:DNA-binding transcription factor activity"/>
    <property type="evidence" value="ECO:0000303"/>
    <property type="project" value="ProtInc"/>
</dbReference>
<dbReference type="GO" id="GO:0000981">
    <property type="term" value="F:DNA-binding transcription factor activity, RNA polymerase II-specific"/>
    <property type="evidence" value="ECO:0000247"/>
    <property type="project" value="NTNU_SB"/>
</dbReference>
<dbReference type="GO" id="GO:0001227">
    <property type="term" value="F:DNA-binding transcription repressor activity, RNA polymerase II-specific"/>
    <property type="evidence" value="ECO:0000314"/>
    <property type="project" value="NTNU_SB"/>
</dbReference>
<dbReference type="GO" id="GO:0035259">
    <property type="term" value="F:nuclear glucocorticoid receptor binding"/>
    <property type="evidence" value="ECO:0007669"/>
    <property type="project" value="Ensembl"/>
</dbReference>
<dbReference type="GO" id="GO:0019904">
    <property type="term" value="F:protein domain specific binding"/>
    <property type="evidence" value="ECO:0000353"/>
    <property type="project" value="CAFA"/>
</dbReference>
<dbReference type="GO" id="GO:0000978">
    <property type="term" value="F:RNA polymerase II cis-regulatory region sequence-specific DNA binding"/>
    <property type="evidence" value="ECO:0000314"/>
    <property type="project" value="NTNU_SB"/>
</dbReference>
<dbReference type="GO" id="GO:0061629">
    <property type="term" value="F:RNA polymerase II-specific DNA-binding transcription factor binding"/>
    <property type="evidence" value="ECO:0000314"/>
    <property type="project" value="BHF-UCL"/>
</dbReference>
<dbReference type="GO" id="GO:1990837">
    <property type="term" value="F:sequence-specific double-stranded DNA binding"/>
    <property type="evidence" value="ECO:0000314"/>
    <property type="project" value="ARUK-UCL"/>
</dbReference>
<dbReference type="GO" id="GO:0030154">
    <property type="term" value="P:cell differentiation"/>
    <property type="evidence" value="ECO:0000318"/>
    <property type="project" value="GO_Central"/>
</dbReference>
<dbReference type="GO" id="GO:0001712">
    <property type="term" value="P:ectodermal cell fate commitment"/>
    <property type="evidence" value="ECO:0007669"/>
    <property type="project" value="Ensembl"/>
</dbReference>
<dbReference type="GO" id="GO:0007498">
    <property type="term" value="P:mesoderm development"/>
    <property type="evidence" value="ECO:0007669"/>
    <property type="project" value="Ensembl"/>
</dbReference>
<dbReference type="GO" id="GO:0000122">
    <property type="term" value="P:negative regulation of transcription by RNA polymerase II"/>
    <property type="evidence" value="ECO:0000314"/>
    <property type="project" value="NTNU_SB"/>
</dbReference>
<dbReference type="GO" id="GO:0045944">
    <property type="term" value="P:positive regulation of transcription by RNA polymerase II"/>
    <property type="evidence" value="ECO:0000314"/>
    <property type="project" value="BHF-UCL"/>
</dbReference>
<dbReference type="GO" id="GO:0090009">
    <property type="term" value="P:primitive streak formation"/>
    <property type="evidence" value="ECO:0007669"/>
    <property type="project" value="Ensembl"/>
</dbReference>
<dbReference type="GO" id="GO:0006357">
    <property type="term" value="P:regulation of transcription by RNA polymerase II"/>
    <property type="evidence" value="ECO:0000318"/>
    <property type="project" value="GO_Central"/>
</dbReference>
<dbReference type="GO" id="GO:0001501">
    <property type="term" value="P:skeletal system development"/>
    <property type="evidence" value="ECO:0000304"/>
    <property type="project" value="ProtInc"/>
</dbReference>
<dbReference type="CDD" id="cd08543">
    <property type="entry name" value="SAM_PNT-ETS-2"/>
    <property type="match status" value="1"/>
</dbReference>
<dbReference type="FunFam" id="1.10.10.10:FF:000097">
    <property type="entry name" value="Protein c-ets-1 isoform 1"/>
    <property type="match status" value="1"/>
</dbReference>
<dbReference type="FunFam" id="1.10.150.50:FF:000014">
    <property type="entry name" value="Protein c-ets-1 isoform 1"/>
    <property type="match status" value="1"/>
</dbReference>
<dbReference type="Gene3D" id="1.10.150.50">
    <property type="entry name" value="Transcription Factor, Ets-1"/>
    <property type="match status" value="1"/>
</dbReference>
<dbReference type="Gene3D" id="1.10.10.10">
    <property type="entry name" value="Winged helix-like DNA-binding domain superfamily/Winged helix DNA-binding domain"/>
    <property type="match status" value="1"/>
</dbReference>
<dbReference type="InterPro" id="IPR045688">
    <property type="entry name" value="Ets1_N_flank"/>
</dbReference>
<dbReference type="InterPro" id="IPR000418">
    <property type="entry name" value="Ets_dom"/>
</dbReference>
<dbReference type="InterPro" id="IPR046328">
    <property type="entry name" value="ETS_fam"/>
</dbReference>
<dbReference type="InterPro" id="IPR003118">
    <property type="entry name" value="Pointed_dom"/>
</dbReference>
<dbReference type="InterPro" id="IPR013761">
    <property type="entry name" value="SAM/pointed_sf"/>
</dbReference>
<dbReference type="InterPro" id="IPR016311">
    <property type="entry name" value="Transform_prot_C-ets"/>
</dbReference>
<dbReference type="InterPro" id="IPR027276">
    <property type="entry name" value="Transform_prot_C-ets-2"/>
</dbReference>
<dbReference type="InterPro" id="IPR036388">
    <property type="entry name" value="WH-like_DNA-bd_sf"/>
</dbReference>
<dbReference type="InterPro" id="IPR036390">
    <property type="entry name" value="WH_DNA-bd_sf"/>
</dbReference>
<dbReference type="PANTHER" id="PTHR11849">
    <property type="entry name" value="ETS"/>
    <property type="match status" value="1"/>
</dbReference>
<dbReference type="PANTHER" id="PTHR11849:SF188">
    <property type="entry name" value="PROTEIN C-ETS-2"/>
    <property type="match status" value="1"/>
</dbReference>
<dbReference type="Pfam" id="PF00178">
    <property type="entry name" value="Ets"/>
    <property type="match status" value="1"/>
</dbReference>
<dbReference type="Pfam" id="PF19525">
    <property type="entry name" value="Ets1_N_flank"/>
    <property type="match status" value="1"/>
</dbReference>
<dbReference type="Pfam" id="PF02198">
    <property type="entry name" value="SAM_PNT"/>
    <property type="match status" value="1"/>
</dbReference>
<dbReference type="PIRSF" id="PIRSF501032">
    <property type="entry name" value="C-ets-2"/>
    <property type="match status" value="1"/>
</dbReference>
<dbReference type="PIRSF" id="PIRSF001698">
    <property type="entry name" value="Transforming_factor_C-ets"/>
    <property type="match status" value="1"/>
</dbReference>
<dbReference type="PRINTS" id="PR00454">
    <property type="entry name" value="ETSDOMAIN"/>
</dbReference>
<dbReference type="SMART" id="SM00413">
    <property type="entry name" value="ETS"/>
    <property type="match status" value="1"/>
</dbReference>
<dbReference type="SMART" id="SM00251">
    <property type="entry name" value="SAM_PNT"/>
    <property type="match status" value="1"/>
</dbReference>
<dbReference type="SUPFAM" id="SSF47769">
    <property type="entry name" value="SAM/Pointed domain"/>
    <property type="match status" value="1"/>
</dbReference>
<dbReference type="SUPFAM" id="SSF46785">
    <property type="entry name" value="Winged helix' DNA-binding domain"/>
    <property type="match status" value="1"/>
</dbReference>
<dbReference type="PROSITE" id="PS00345">
    <property type="entry name" value="ETS_DOMAIN_1"/>
    <property type="match status" value="1"/>
</dbReference>
<dbReference type="PROSITE" id="PS00346">
    <property type="entry name" value="ETS_DOMAIN_2"/>
    <property type="match status" value="1"/>
</dbReference>
<dbReference type="PROSITE" id="PS50061">
    <property type="entry name" value="ETS_DOMAIN_3"/>
    <property type="match status" value="1"/>
</dbReference>
<dbReference type="PROSITE" id="PS51433">
    <property type="entry name" value="PNT"/>
    <property type="match status" value="1"/>
</dbReference>
<proteinExistence type="evidence at protein level"/>
<gene>
    <name type="primary">ETS2</name>
</gene>
<reference key="1">
    <citation type="journal article" date="1988" name="Proc. Natl. Acad. Sci. U.S.A.">
        <title>Mammalian ets-1 and ets-2 genes encode highly conserved proteins.</title>
        <authorList>
            <person name="Watson D.K."/>
            <person name="McWilliams M.J."/>
            <person name="Lapis P."/>
            <person name="Lautenberger J.A."/>
            <person name="Schweinfest C.W."/>
            <person name="Papas T.S."/>
        </authorList>
    </citation>
    <scope>NUCLEOTIDE SEQUENCE [MRNA]</scope>
</reference>
<reference key="2">
    <citation type="submission" date="1997-08" db="EMBL/GenBank/DDBJ databases">
        <authorList>
            <person name="Zimmermann W.W.K."/>
            <person name="Korenberg J."/>
            <person name="Rosenthal A."/>
            <person name="Schattevoy R."/>
        </authorList>
    </citation>
    <scope>NUCLEOTIDE SEQUENCE [GENOMIC DNA]</scope>
</reference>
<reference key="3">
    <citation type="journal article" date="2004" name="Nat. Genet.">
        <title>Complete sequencing and characterization of 21,243 full-length human cDNAs.</title>
        <authorList>
            <person name="Ota T."/>
            <person name="Suzuki Y."/>
            <person name="Nishikawa T."/>
            <person name="Otsuki T."/>
            <person name="Sugiyama T."/>
            <person name="Irie R."/>
            <person name="Wakamatsu A."/>
            <person name="Hayashi K."/>
            <person name="Sato H."/>
            <person name="Nagai K."/>
            <person name="Kimura K."/>
            <person name="Makita H."/>
            <person name="Sekine M."/>
            <person name="Obayashi M."/>
            <person name="Nishi T."/>
            <person name="Shibahara T."/>
            <person name="Tanaka T."/>
            <person name="Ishii S."/>
            <person name="Yamamoto J."/>
            <person name="Saito K."/>
            <person name="Kawai Y."/>
            <person name="Isono Y."/>
            <person name="Nakamura Y."/>
            <person name="Nagahari K."/>
            <person name="Murakami K."/>
            <person name="Yasuda T."/>
            <person name="Iwayanagi T."/>
            <person name="Wagatsuma M."/>
            <person name="Shiratori A."/>
            <person name="Sudo H."/>
            <person name="Hosoiri T."/>
            <person name="Kaku Y."/>
            <person name="Kodaira H."/>
            <person name="Kondo H."/>
            <person name="Sugawara M."/>
            <person name="Takahashi M."/>
            <person name="Kanda K."/>
            <person name="Yokoi T."/>
            <person name="Furuya T."/>
            <person name="Kikkawa E."/>
            <person name="Omura Y."/>
            <person name="Abe K."/>
            <person name="Kamihara K."/>
            <person name="Katsuta N."/>
            <person name="Sato K."/>
            <person name="Tanikawa M."/>
            <person name="Yamazaki M."/>
            <person name="Ninomiya K."/>
            <person name="Ishibashi T."/>
            <person name="Yamashita H."/>
            <person name="Murakawa K."/>
            <person name="Fujimori K."/>
            <person name="Tanai H."/>
            <person name="Kimata M."/>
            <person name="Watanabe M."/>
            <person name="Hiraoka S."/>
            <person name="Chiba Y."/>
            <person name="Ishida S."/>
            <person name="Ono Y."/>
            <person name="Takiguchi S."/>
            <person name="Watanabe S."/>
            <person name="Yosida M."/>
            <person name="Hotuta T."/>
            <person name="Kusano J."/>
            <person name="Kanehori K."/>
            <person name="Takahashi-Fujii A."/>
            <person name="Hara H."/>
            <person name="Tanase T.-O."/>
            <person name="Nomura Y."/>
            <person name="Togiya S."/>
            <person name="Komai F."/>
            <person name="Hara R."/>
            <person name="Takeuchi K."/>
            <person name="Arita M."/>
            <person name="Imose N."/>
            <person name="Musashino K."/>
            <person name="Yuuki H."/>
            <person name="Oshima A."/>
            <person name="Sasaki N."/>
            <person name="Aotsuka S."/>
            <person name="Yoshikawa Y."/>
            <person name="Matsunawa H."/>
            <person name="Ichihara T."/>
            <person name="Shiohata N."/>
            <person name="Sano S."/>
            <person name="Moriya S."/>
            <person name="Momiyama H."/>
            <person name="Satoh N."/>
            <person name="Takami S."/>
            <person name="Terashima Y."/>
            <person name="Suzuki O."/>
            <person name="Nakagawa S."/>
            <person name="Senoh A."/>
            <person name="Mizoguchi H."/>
            <person name="Goto Y."/>
            <person name="Shimizu F."/>
            <person name="Wakebe H."/>
            <person name="Hishigaki H."/>
            <person name="Watanabe T."/>
            <person name="Sugiyama A."/>
            <person name="Takemoto M."/>
            <person name="Kawakami B."/>
            <person name="Yamazaki M."/>
            <person name="Watanabe K."/>
            <person name="Kumagai A."/>
            <person name="Itakura S."/>
            <person name="Fukuzumi Y."/>
            <person name="Fujimori Y."/>
            <person name="Komiyama M."/>
            <person name="Tashiro H."/>
            <person name="Tanigami A."/>
            <person name="Fujiwara T."/>
            <person name="Ono T."/>
            <person name="Yamada K."/>
            <person name="Fujii Y."/>
            <person name="Ozaki K."/>
            <person name="Hirao M."/>
            <person name="Ohmori Y."/>
            <person name="Kawabata A."/>
            <person name="Hikiji T."/>
            <person name="Kobatake N."/>
            <person name="Inagaki H."/>
            <person name="Ikema Y."/>
            <person name="Okamoto S."/>
            <person name="Okitani R."/>
            <person name="Kawakami T."/>
            <person name="Noguchi S."/>
            <person name="Itoh T."/>
            <person name="Shigeta K."/>
            <person name="Senba T."/>
            <person name="Matsumura K."/>
            <person name="Nakajima Y."/>
            <person name="Mizuno T."/>
            <person name="Morinaga M."/>
            <person name="Sasaki M."/>
            <person name="Togashi T."/>
            <person name="Oyama M."/>
            <person name="Hata H."/>
            <person name="Watanabe M."/>
            <person name="Komatsu T."/>
            <person name="Mizushima-Sugano J."/>
            <person name="Satoh T."/>
            <person name="Shirai Y."/>
            <person name="Takahashi Y."/>
            <person name="Nakagawa K."/>
            <person name="Okumura K."/>
            <person name="Nagase T."/>
            <person name="Nomura N."/>
            <person name="Kikuchi H."/>
            <person name="Masuho Y."/>
            <person name="Yamashita R."/>
            <person name="Nakai K."/>
            <person name="Yada T."/>
            <person name="Nakamura Y."/>
            <person name="Ohara O."/>
            <person name="Isogai T."/>
            <person name="Sugano S."/>
        </authorList>
    </citation>
    <scope>NUCLEOTIDE SEQUENCE [LARGE SCALE MRNA]</scope>
    <source>
        <tissue>Placenta</tissue>
    </source>
</reference>
<reference key="4">
    <citation type="submission" date="2003-05" db="EMBL/GenBank/DDBJ databases">
        <title>Cloning of human full-length CDSs in BD Creator(TM) system donor vector.</title>
        <authorList>
            <person name="Kalnine N."/>
            <person name="Chen X."/>
            <person name="Rolfs A."/>
            <person name="Halleck A."/>
            <person name="Hines L."/>
            <person name="Eisenstein S."/>
            <person name="Koundinya M."/>
            <person name="Raphael J."/>
            <person name="Moreira D."/>
            <person name="Kelley T."/>
            <person name="LaBaer J."/>
            <person name="Lin Y."/>
            <person name="Phelan M."/>
            <person name="Farmer A."/>
        </authorList>
    </citation>
    <scope>NUCLEOTIDE SEQUENCE [LARGE SCALE MRNA]</scope>
</reference>
<reference key="5">
    <citation type="journal article" date="2000" name="Nature">
        <title>The DNA sequence of human chromosome 21.</title>
        <authorList>
            <person name="Hattori M."/>
            <person name="Fujiyama A."/>
            <person name="Taylor T.D."/>
            <person name="Watanabe H."/>
            <person name="Yada T."/>
            <person name="Park H.-S."/>
            <person name="Toyoda A."/>
            <person name="Ishii K."/>
            <person name="Totoki Y."/>
            <person name="Choi D.-K."/>
            <person name="Groner Y."/>
            <person name="Soeda E."/>
            <person name="Ohki M."/>
            <person name="Takagi T."/>
            <person name="Sakaki Y."/>
            <person name="Taudien S."/>
            <person name="Blechschmidt K."/>
            <person name="Polley A."/>
            <person name="Menzel U."/>
            <person name="Delabar J."/>
            <person name="Kumpf K."/>
            <person name="Lehmann R."/>
            <person name="Patterson D."/>
            <person name="Reichwald K."/>
            <person name="Rump A."/>
            <person name="Schillhabel M."/>
            <person name="Schudy A."/>
            <person name="Zimmermann W."/>
            <person name="Rosenthal A."/>
            <person name="Kudoh J."/>
            <person name="Shibuya K."/>
            <person name="Kawasaki K."/>
            <person name="Asakawa S."/>
            <person name="Shintani A."/>
            <person name="Sasaki T."/>
            <person name="Nagamine K."/>
            <person name="Mitsuyama S."/>
            <person name="Antonarakis S.E."/>
            <person name="Minoshima S."/>
            <person name="Shimizu N."/>
            <person name="Nordsiek G."/>
            <person name="Hornischer K."/>
            <person name="Brandt P."/>
            <person name="Scharfe M."/>
            <person name="Schoen O."/>
            <person name="Desario A."/>
            <person name="Reichelt J."/>
            <person name="Kauer G."/>
            <person name="Bloecker H."/>
            <person name="Ramser J."/>
            <person name="Beck A."/>
            <person name="Klages S."/>
            <person name="Hennig S."/>
            <person name="Riesselmann L."/>
            <person name="Dagand E."/>
            <person name="Wehrmeyer S."/>
            <person name="Borzym K."/>
            <person name="Gardiner K."/>
            <person name="Nizetic D."/>
            <person name="Francis F."/>
            <person name="Lehrach H."/>
            <person name="Reinhardt R."/>
            <person name="Yaspo M.-L."/>
        </authorList>
    </citation>
    <scope>NUCLEOTIDE SEQUENCE [LARGE SCALE GENOMIC DNA]</scope>
</reference>
<reference key="6">
    <citation type="submission" date="2005-09" db="EMBL/GenBank/DDBJ databases">
        <authorList>
            <person name="Mural R.J."/>
            <person name="Istrail S."/>
            <person name="Sutton G.G."/>
            <person name="Florea L."/>
            <person name="Halpern A.L."/>
            <person name="Mobarry C.M."/>
            <person name="Lippert R."/>
            <person name="Walenz B."/>
            <person name="Shatkay H."/>
            <person name="Dew I."/>
            <person name="Miller J.R."/>
            <person name="Flanigan M.J."/>
            <person name="Edwards N.J."/>
            <person name="Bolanos R."/>
            <person name="Fasulo D."/>
            <person name="Halldorsson B.V."/>
            <person name="Hannenhalli S."/>
            <person name="Turner R."/>
            <person name="Yooseph S."/>
            <person name="Lu F."/>
            <person name="Nusskern D.R."/>
            <person name="Shue B.C."/>
            <person name="Zheng X.H."/>
            <person name="Zhong F."/>
            <person name="Delcher A.L."/>
            <person name="Huson D.H."/>
            <person name="Kravitz S.A."/>
            <person name="Mouchard L."/>
            <person name="Reinert K."/>
            <person name="Remington K.A."/>
            <person name="Clark A.G."/>
            <person name="Waterman M.S."/>
            <person name="Eichler E.E."/>
            <person name="Adams M.D."/>
            <person name="Hunkapiller M.W."/>
            <person name="Myers E.W."/>
            <person name="Venter J.C."/>
        </authorList>
    </citation>
    <scope>NUCLEOTIDE SEQUENCE [LARGE SCALE GENOMIC DNA]</scope>
</reference>
<reference key="7">
    <citation type="journal article" date="2004" name="Genome Res.">
        <title>The status, quality, and expansion of the NIH full-length cDNA project: the Mammalian Gene Collection (MGC).</title>
        <authorList>
            <consortium name="The MGC Project Team"/>
        </authorList>
    </citation>
    <scope>NUCLEOTIDE SEQUENCE [LARGE SCALE MRNA]</scope>
    <source>
        <tissue>Brain</tissue>
        <tissue>Colon</tissue>
    </source>
</reference>
<reference key="8">
    <citation type="journal article" date="1990" name="Oncogene">
        <title>Molecular organization and differential polyadenylation sites of the human ETS2 gene.</title>
        <authorList>
            <person name="Watson D.K."/>
            <person name="Mavrothalassitis G.J."/>
            <person name="Jorcyk C.L."/>
            <person name="Smyth F.E."/>
            <person name="Papas T.S."/>
        </authorList>
    </citation>
    <scope>NUCLEOTIDE SEQUENCE [GENOMIC DNA] OF 399-469</scope>
</reference>
<reference key="9">
    <citation type="journal article" date="1985" name="Proc. Natl. Acad. Sci. U.S.A.">
        <title>The ets sequence from the transforming gene of avian erythroblastosis virus, E26, has unique domains on human chromosomes 11 and 21: both loci are transcriptionally active.</title>
        <authorList>
            <person name="Watson D.K."/>
            <person name="McWilliams-Smith M.J."/>
            <person name="Nunn M.F."/>
            <person name="Duesberg P.H."/>
            <person name="O'Brien S.J."/>
            <person name="Papas T.S."/>
        </authorList>
    </citation>
    <scope>NUCLEOTIDE SEQUENCE [MRNA] OF 324-469</scope>
</reference>
<reference key="10">
    <citation type="journal article" date="2002" name="Mol. Cell. Biol.">
        <title>Sp100 interacts with ETS-1 and stimulates its transcriptional activity.</title>
        <authorList>
            <person name="Wasylyk C."/>
            <person name="Schlumberger S.E."/>
            <person name="Criqui-Filipe P."/>
            <person name="Wasylyk B."/>
        </authorList>
    </citation>
    <scope>FUNCTION AS A TRANSCRIPTIONAL ACTIVATOR</scope>
</reference>
<reference key="11">
    <citation type="journal article" date="2008" name="Mol. Cell">
        <title>Kinase-selective enrichment enables quantitative phosphoproteomics of the kinome across the cell cycle.</title>
        <authorList>
            <person name="Daub H."/>
            <person name="Olsen J.V."/>
            <person name="Bairlein M."/>
            <person name="Gnad F."/>
            <person name="Oppermann F.S."/>
            <person name="Korner R."/>
            <person name="Greff Z."/>
            <person name="Keri G."/>
            <person name="Stemmann O."/>
            <person name="Mann M."/>
        </authorList>
    </citation>
    <scope>PHOSPHORYLATION [LARGE SCALE ANALYSIS] AT SER-295</scope>
    <scope>IDENTIFICATION BY MASS SPECTROMETRY [LARGE SCALE ANALYSIS]</scope>
    <source>
        <tissue>Cervix carcinoma</tissue>
    </source>
</reference>
<reference key="12">
    <citation type="journal article" date="2013" name="Proc. Natl. Acad. Sci. U.S.A.">
        <title>CDK10/cyclin M is a protein kinase that controls ETS2 degradation and is deficient in STAR syndrome.</title>
        <authorList>
            <person name="Guen V.J."/>
            <person name="Gamble C."/>
            <person name="Flajolet M."/>
            <person name="Unger S."/>
            <person name="Thollet A."/>
            <person name="Ferandin Y."/>
            <person name="Superti-Furga A."/>
            <person name="Cohen P.A."/>
            <person name="Meijer L."/>
            <person name="Colas P."/>
        </authorList>
    </citation>
    <scope>PHOSPHORYLATION AT SER-220 AND SER-225</scope>
</reference>
<feature type="chain" id="PRO_0000204077" description="Protein C-ets-2">
    <location>
        <begin position="1"/>
        <end position="469"/>
    </location>
</feature>
<feature type="domain" description="PNT" evidence="3">
    <location>
        <begin position="85"/>
        <end position="170"/>
    </location>
</feature>
<feature type="DNA-binding region" description="ETS" evidence="2">
    <location>
        <begin position="363"/>
        <end position="443"/>
    </location>
</feature>
<feature type="region of interest" description="Disordered" evidence="4">
    <location>
        <begin position="264"/>
        <end position="289"/>
    </location>
</feature>
<feature type="modified residue" description="Phosphoserine" evidence="6">
    <location>
        <position position="220"/>
    </location>
</feature>
<feature type="modified residue" description="Phosphoserine" evidence="6">
    <location>
        <position position="225"/>
    </location>
</feature>
<feature type="modified residue" description="Phosphoserine" evidence="8">
    <location>
        <position position="295"/>
    </location>
</feature>
<feature type="modified residue" description="Phosphoserine" evidence="1">
    <location>
        <position position="298"/>
    </location>
</feature>
<feature type="modified residue" description="Phosphoserine" evidence="1">
    <location>
        <position position="301"/>
    </location>
</feature>
<feature type="helix" evidence="10">
    <location>
        <begin position="78"/>
        <end position="84"/>
    </location>
</feature>
<feature type="helix" evidence="10">
    <location>
        <begin position="85"/>
        <end position="89"/>
    </location>
</feature>
<feature type="helix" evidence="10">
    <location>
        <begin position="90"/>
        <end position="96"/>
    </location>
</feature>
<feature type="helix" evidence="10">
    <location>
        <begin position="103"/>
        <end position="105"/>
    </location>
</feature>
<feature type="helix" evidence="10">
    <location>
        <begin position="108"/>
        <end position="121"/>
    </location>
</feature>
<feature type="helix" evidence="10">
    <location>
        <begin position="129"/>
        <end position="132"/>
    </location>
</feature>
<feature type="helix" evidence="10">
    <location>
        <begin position="136"/>
        <end position="141"/>
    </location>
</feature>
<feature type="helix" evidence="10">
    <location>
        <begin position="144"/>
        <end position="150"/>
    </location>
</feature>
<feature type="helix" evidence="10">
    <location>
        <begin position="155"/>
        <end position="169"/>
    </location>
</feature>
<feature type="helix" evidence="9">
    <location>
        <begin position="331"/>
        <end position="334"/>
    </location>
</feature>
<feature type="helix" evidence="9">
    <location>
        <begin position="335"/>
        <end position="337"/>
    </location>
</feature>
<feature type="strand" evidence="9">
    <location>
        <begin position="338"/>
        <end position="342"/>
    </location>
</feature>
<feature type="strand" evidence="9">
    <location>
        <begin position="344"/>
        <end position="346"/>
    </location>
</feature>
<feature type="helix" evidence="9">
    <location>
        <begin position="351"/>
        <end position="358"/>
    </location>
</feature>
<feature type="helix" evidence="9">
    <location>
        <begin position="365"/>
        <end position="373"/>
    </location>
</feature>
<feature type="helix" evidence="9">
    <location>
        <begin position="376"/>
        <end position="378"/>
    </location>
</feature>
<feature type="turn" evidence="9">
    <location>
        <begin position="379"/>
        <end position="381"/>
    </location>
</feature>
<feature type="strand" evidence="9">
    <location>
        <begin position="382"/>
        <end position="384"/>
    </location>
</feature>
<feature type="strand" evidence="9">
    <location>
        <begin position="390"/>
        <end position="392"/>
    </location>
</feature>
<feature type="helix" evidence="9">
    <location>
        <begin position="396"/>
        <end position="407"/>
    </location>
</feature>
<feature type="helix" evidence="9">
    <location>
        <begin position="414"/>
        <end position="422"/>
    </location>
</feature>
<feature type="turn" evidence="9">
    <location>
        <begin position="423"/>
        <end position="428"/>
    </location>
</feature>
<feature type="strand" evidence="9">
    <location>
        <begin position="429"/>
        <end position="432"/>
    </location>
</feature>
<feature type="strand" evidence="9">
    <location>
        <begin position="439"/>
        <end position="442"/>
    </location>
</feature>
<feature type="helix" evidence="9">
    <location>
        <begin position="446"/>
        <end position="450"/>
    </location>
</feature>
<feature type="helix" evidence="9">
    <location>
        <begin position="454"/>
        <end position="457"/>
    </location>
</feature>
<name>ETS2_HUMAN</name>
<accession>P15036</accession>
<accession>A6NM68</accession>
<accession>D3DSH6</accession>
<accession>Q53Y89</accession>
<protein>
    <recommendedName>
        <fullName>Protein C-ets-2</fullName>
    </recommendedName>
</protein>
<evidence type="ECO:0000250" key="1">
    <source>
        <dbReference type="UniProtKB" id="P15037"/>
    </source>
</evidence>
<evidence type="ECO:0000255" key="2">
    <source>
        <dbReference type="PROSITE-ProRule" id="PRU00237"/>
    </source>
</evidence>
<evidence type="ECO:0000255" key="3">
    <source>
        <dbReference type="PROSITE-ProRule" id="PRU00762"/>
    </source>
</evidence>
<evidence type="ECO:0000256" key="4">
    <source>
        <dbReference type="SAM" id="MobiDB-lite"/>
    </source>
</evidence>
<evidence type="ECO:0000269" key="5">
    <source>
    </source>
</evidence>
<evidence type="ECO:0000269" key="6">
    <source>
    </source>
</evidence>
<evidence type="ECO:0000305" key="7"/>
<evidence type="ECO:0007744" key="8">
    <source>
    </source>
</evidence>
<evidence type="ECO:0007829" key="9">
    <source>
        <dbReference type="PDB" id="4BQA"/>
    </source>
</evidence>
<evidence type="ECO:0007829" key="10">
    <source>
        <dbReference type="PDB" id="4MHV"/>
    </source>
</evidence>
<keyword id="KW-0002">3D-structure</keyword>
<keyword id="KW-0238">DNA-binding</keyword>
<keyword id="KW-0539">Nucleus</keyword>
<keyword id="KW-0597">Phosphoprotein</keyword>
<keyword id="KW-1267">Proteomics identification</keyword>
<keyword id="KW-0656">Proto-oncogene</keyword>
<keyword id="KW-1185">Reference proteome</keyword>
<keyword id="KW-0804">Transcription</keyword>
<keyword id="KW-0805">Transcription regulation</keyword>
<comment type="function">
    <text evidence="5">Transcription factor activating transcription. Binds specifically the DNA GGAA/T core motif (Ets-binding site or EBS) in gene promoters and stimulates transcription.</text>
</comment>
<comment type="interaction">
    <interactant intactId="EBI-1646991">
        <id>P15036</id>
    </interactant>
    <interactant intactId="EBI-1646959">
        <id>Q15131</id>
        <label>CDK10</label>
    </interactant>
    <organismsDiffer>false</organismsDiffer>
    <experiments>2</experiments>
</comment>
<comment type="interaction">
    <interactant intactId="EBI-1646991">
        <id>P15036</id>
    </interactant>
    <interactant intactId="EBI-1176214">
        <id>Q8NHY2</id>
        <label>COP1</label>
    </interactant>
    <organismsDiffer>false</organismsDiffer>
    <experiments>2</experiments>
</comment>
<comment type="interaction">
    <interactant intactId="EBI-1646991">
        <id>P15036</id>
    </interactant>
    <interactant intactId="EBI-2007911">
        <id>Q16236</id>
        <label>NFE2L2</label>
    </interactant>
    <organismsDiffer>false</organismsDiffer>
    <experiments>2</experiments>
</comment>
<comment type="interaction">
    <interactant intactId="EBI-1646991">
        <id>P15036</id>
    </interactant>
    <interactant intactId="EBI-476586">
        <id>P17612</id>
        <label>PRKACA</label>
    </interactant>
    <organismsDiffer>false</organismsDiffer>
    <experiments>3</experiments>
</comment>
<comment type="interaction">
    <interactant intactId="EBI-1646991">
        <id>P15036</id>
    </interactant>
    <interactant intactId="EBI-350723">
        <id>P50454</id>
        <label>SERPINH1</label>
    </interactant>
    <organismsDiffer>false</organismsDiffer>
    <experiments>3</experiments>
</comment>
<comment type="interaction">
    <interactant intactId="EBI-1646991">
        <id>P15036</id>
    </interactant>
    <interactant intactId="EBI-296151">
        <id>P37173</id>
        <label>TGFBR2</label>
    </interactant>
    <organismsDiffer>false</organismsDiffer>
    <experiments>3</experiments>
</comment>
<comment type="interaction">
    <interactant intactId="EBI-1646991">
        <id>P15036</id>
    </interactant>
    <interactant intactId="EBI-366083">
        <id>P04637</id>
        <label>TP53</label>
    </interactant>
    <organismsDiffer>false</organismsDiffer>
    <experiments>4</experiments>
</comment>
<comment type="interaction">
    <interactant intactId="EBI-1646991">
        <id>P15036</id>
    </interactant>
    <interactant intactId="EBI-1797287">
        <id>Q15672</id>
        <label>TWIST1</label>
    </interactant>
    <organismsDiffer>false</organismsDiffer>
    <experiments>2</experiments>
</comment>
<comment type="interaction">
    <interactant intactId="EBI-1646991">
        <id>P15036</id>
    </interactant>
    <interactant intactId="EBI-1797313">
        <id>Q8WVJ9</id>
        <label>TWIST2</label>
    </interactant>
    <organismsDiffer>false</organismsDiffer>
    <experiments>2</experiments>
</comment>
<comment type="subcellular location">
    <subcellularLocation>
        <location>Nucleus</location>
    </subcellularLocation>
</comment>
<comment type="PTM">
    <text evidence="6">Phosphorylation by CDK10 at Ser-220 and Ser-225 creates a phosphodegron that targets ETS2 for proteasomal degradation.</text>
</comment>
<comment type="similarity">
    <text evidence="7">Belongs to the ETS family.</text>
</comment>
<comment type="online information" name="Atlas of Genetics and Cytogenetics in Oncology and Haematology">
    <link uri="https://atlasgeneticsoncology.org/gene/40503/ETS2"/>
</comment>
<sequence length="469" mass="53001">MNDFGIKNMDQVAPVANSYRGTLKRQPAFDTFDGSLFAVFPSLNEEQTLQEVPTGLDSISHDSANCELPLLTPCSKAVMSQALKATFSGFKKEQRRLGIPKNPWLWSEQQVCQWLLWATNEFSLVNVNLQRFGMNGQMLCNLGKERFLELAPDFVGDILWEHLEQMIKENQEKTEDQYEENSHLTSVPHWINSNTLGFGTEQAPYGMQTQNYPKGGLLDSMCPASTPSVLSSEQEFQMFPKSRLSSVSVTYCSVSQDFPGSNLNLLTNNSGTPKDHDSPENGADSFESSDSLLQSWNSQSSLLDVQRVPSFESFEDDCSQSLCLNKPTMSFKDYIQERSDPVEQGKPVIPAAVLAGFTGSGPIQLWQFLLELLSDKSCQSFISWTGDGWEFKLADPDEVARRWGKRKNKPKMNYEKLSRGLRYYYDKNIIHKTSGKRYVYRFVCDLQNLLGFTPEELHAILGVQPDTED</sequence>